<name>SYGA_PROMA</name>
<evidence type="ECO:0000255" key="1">
    <source>
        <dbReference type="HAMAP-Rule" id="MF_00254"/>
    </source>
</evidence>
<dbReference type="EC" id="6.1.1.14" evidence="1"/>
<dbReference type="EMBL" id="AE017126">
    <property type="protein sequence ID" value="AAQ00312.1"/>
    <property type="molecule type" value="Genomic_DNA"/>
</dbReference>
<dbReference type="RefSeq" id="NP_875659.1">
    <property type="nucleotide sequence ID" value="NC_005042.1"/>
</dbReference>
<dbReference type="RefSeq" id="WP_011125419.1">
    <property type="nucleotide sequence ID" value="NC_005042.1"/>
</dbReference>
<dbReference type="SMR" id="Q7VB32"/>
<dbReference type="STRING" id="167539.Pro_1268"/>
<dbReference type="EnsemblBacteria" id="AAQ00312">
    <property type="protein sequence ID" value="AAQ00312"/>
    <property type="gene ID" value="Pro_1268"/>
</dbReference>
<dbReference type="KEGG" id="pma:Pro_1268"/>
<dbReference type="PATRIC" id="fig|167539.5.peg.1330"/>
<dbReference type="eggNOG" id="COG0752">
    <property type="taxonomic scope" value="Bacteria"/>
</dbReference>
<dbReference type="HOGENOM" id="CLU_057066_1_0_3"/>
<dbReference type="OrthoDB" id="9802183at2"/>
<dbReference type="Proteomes" id="UP000001420">
    <property type="component" value="Chromosome"/>
</dbReference>
<dbReference type="GO" id="GO:0005829">
    <property type="term" value="C:cytosol"/>
    <property type="evidence" value="ECO:0007669"/>
    <property type="project" value="TreeGrafter"/>
</dbReference>
<dbReference type="GO" id="GO:0005524">
    <property type="term" value="F:ATP binding"/>
    <property type="evidence" value="ECO:0007669"/>
    <property type="project" value="UniProtKB-UniRule"/>
</dbReference>
<dbReference type="GO" id="GO:0004820">
    <property type="term" value="F:glycine-tRNA ligase activity"/>
    <property type="evidence" value="ECO:0007669"/>
    <property type="project" value="UniProtKB-UniRule"/>
</dbReference>
<dbReference type="GO" id="GO:0006426">
    <property type="term" value="P:glycyl-tRNA aminoacylation"/>
    <property type="evidence" value="ECO:0007669"/>
    <property type="project" value="UniProtKB-UniRule"/>
</dbReference>
<dbReference type="CDD" id="cd00733">
    <property type="entry name" value="GlyRS_alpha_core"/>
    <property type="match status" value="1"/>
</dbReference>
<dbReference type="FunFam" id="3.30.930.10:FF:000006">
    <property type="entry name" value="Glycine--tRNA ligase alpha subunit"/>
    <property type="match status" value="1"/>
</dbReference>
<dbReference type="Gene3D" id="3.30.930.10">
    <property type="entry name" value="Bira Bifunctional Protein, Domain 2"/>
    <property type="match status" value="1"/>
</dbReference>
<dbReference type="Gene3D" id="1.20.58.180">
    <property type="entry name" value="Class II aaRS and biotin synthetases, domain 2"/>
    <property type="match status" value="1"/>
</dbReference>
<dbReference type="HAMAP" id="MF_00254">
    <property type="entry name" value="Gly_tRNA_synth_alpha"/>
    <property type="match status" value="1"/>
</dbReference>
<dbReference type="InterPro" id="IPR045864">
    <property type="entry name" value="aa-tRNA-synth_II/BPL/LPL"/>
</dbReference>
<dbReference type="InterPro" id="IPR006194">
    <property type="entry name" value="Gly-tRNA-synth_heterodimer"/>
</dbReference>
<dbReference type="InterPro" id="IPR002310">
    <property type="entry name" value="Gly-tRNA_ligase_asu"/>
</dbReference>
<dbReference type="NCBIfam" id="TIGR00388">
    <property type="entry name" value="glyQ"/>
    <property type="match status" value="1"/>
</dbReference>
<dbReference type="NCBIfam" id="NF006827">
    <property type="entry name" value="PRK09348.1"/>
    <property type="match status" value="1"/>
</dbReference>
<dbReference type="PANTHER" id="PTHR30075:SF2">
    <property type="entry name" value="GLYCINE--TRNA LIGASE, CHLOROPLASTIC_MITOCHONDRIAL 2"/>
    <property type="match status" value="1"/>
</dbReference>
<dbReference type="PANTHER" id="PTHR30075">
    <property type="entry name" value="GLYCYL-TRNA SYNTHETASE"/>
    <property type="match status" value="1"/>
</dbReference>
<dbReference type="Pfam" id="PF02091">
    <property type="entry name" value="tRNA-synt_2e"/>
    <property type="match status" value="1"/>
</dbReference>
<dbReference type="PRINTS" id="PR01044">
    <property type="entry name" value="TRNASYNTHGA"/>
</dbReference>
<dbReference type="SUPFAM" id="SSF55681">
    <property type="entry name" value="Class II aaRS and biotin synthetases"/>
    <property type="match status" value="1"/>
</dbReference>
<dbReference type="PROSITE" id="PS50861">
    <property type="entry name" value="AA_TRNA_LIGASE_II_GLYAB"/>
    <property type="match status" value="1"/>
</dbReference>
<protein>
    <recommendedName>
        <fullName evidence="1">Glycine--tRNA ligase alpha subunit</fullName>
        <ecNumber evidence="1">6.1.1.14</ecNumber>
    </recommendedName>
    <alternativeName>
        <fullName evidence="1">Glycyl-tRNA synthetase alpha subunit</fullName>
        <shortName evidence="1">GlyRS</shortName>
    </alternativeName>
</protein>
<keyword id="KW-0030">Aminoacyl-tRNA synthetase</keyword>
<keyword id="KW-0067">ATP-binding</keyword>
<keyword id="KW-0963">Cytoplasm</keyword>
<keyword id="KW-0436">Ligase</keyword>
<keyword id="KW-0547">Nucleotide-binding</keyword>
<keyword id="KW-0648">Protein biosynthesis</keyword>
<keyword id="KW-1185">Reference proteome</keyword>
<accession>Q7VB32</accession>
<feature type="chain" id="PRO_1000047462" description="Glycine--tRNA ligase alpha subunit">
    <location>
        <begin position="1"/>
        <end position="296"/>
    </location>
</feature>
<organism>
    <name type="scientific">Prochlorococcus marinus (strain SARG / CCMP1375 / SS120)</name>
    <dbReference type="NCBI Taxonomy" id="167539"/>
    <lineage>
        <taxon>Bacteria</taxon>
        <taxon>Bacillati</taxon>
        <taxon>Cyanobacteriota</taxon>
        <taxon>Cyanophyceae</taxon>
        <taxon>Synechococcales</taxon>
        <taxon>Prochlorococcaceae</taxon>
        <taxon>Prochlorococcus</taxon>
    </lineage>
</organism>
<reference key="1">
    <citation type="journal article" date="2003" name="Proc. Natl. Acad. Sci. U.S.A.">
        <title>Genome sequence of the cyanobacterium Prochlorococcus marinus SS120, a nearly minimal oxyphototrophic genome.</title>
        <authorList>
            <person name="Dufresne A."/>
            <person name="Salanoubat M."/>
            <person name="Partensky F."/>
            <person name="Artiguenave F."/>
            <person name="Axmann I.M."/>
            <person name="Barbe V."/>
            <person name="Duprat S."/>
            <person name="Galperin M.Y."/>
            <person name="Koonin E.V."/>
            <person name="Le Gall F."/>
            <person name="Makarova K.S."/>
            <person name="Ostrowski M."/>
            <person name="Oztas S."/>
            <person name="Robert C."/>
            <person name="Rogozin I.B."/>
            <person name="Scanlan D.J."/>
            <person name="Tandeau de Marsac N."/>
            <person name="Weissenbach J."/>
            <person name="Wincker P."/>
            <person name="Wolf Y.I."/>
            <person name="Hess W.R."/>
        </authorList>
    </citation>
    <scope>NUCLEOTIDE SEQUENCE [LARGE SCALE GENOMIC DNA]</scope>
    <source>
        <strain>SARG / CCMP1375 / SS120</strain>
    </source>
</reference>
<proteinExistence type="inferred from homology"/>
<gene>
    <name evidence="1" type="primary">glyQ</name>
    <name type="ordered locus">Pro_1268</name>
</gene>
<comment type="catalytic activity">
    <reaction evidence="1">
        <text>tRNA(Gly) + glycine + ATP = glycyl-tRNA(Gly) + AMP + diphosphate</text>
        <dbReference type="Rhea" id="RHEA:16013"/>
        <dbReference type="Rhea" id="RHEA-COMP:9664"/>
        <dbReference type="Rhea" id="RHEA-COMP:9683"/>
        <dbReference type="ChEBI" id="CHEBI:30616"/>
        <dbReference type="ChEBI" id="CHEBI:33019"/>
        <dbReference type="ChEBI" id="CHEBI:57305"/>
        <dbReference type="ChEBI" id="CHEBI:78442"/>
        <dbReference type="ChEBI" id="CHEBI:78522"/>
        <dbReference type="ChEBI" id="CHEBI:456215"/>
        <dbReference type="EC" id="6.1.1.14"/>
    </reaction>
</comment>
<comment type="subunit">
    <text evidence="1">Tetramer of two alpha and two beta subunits.</text>
</comment>
<comment type="subcellular location">
    <subcellularLocation>
        <location evidence="1">Cytoplasm</location>
    </subcellularLocation>
</comment>
<comment type="similarity">
    <text evidence="1">Belongs to the class-II aminoacyl-tRNA synthetase family.</text>
</comment>
<sequence>MNFQDIISSLNSFWSNQGCVLLQPYDTEKGAGTMSPHTILRAIGPEPWSVAYVEPCRRPTDGRYGENPNRAQHYYQYQVIIKPSPDEIQEKYLSSLEALGIKQEQHDIRFVEDNWESPTLGAWGVGWEVWLDGMEVTQFTYFQQCGGLDCRPVSIEITYGLERIAMYLQDVKSIWDLRWNDSYSYGDIWLPYEKSNCKFNFEGSNPERLFKLFDLYEEEAKSLLNKRLSSPALDFVLKCSHTFNLLEARGVISVTERTATIARIRNLARKVAELWLEERKNIGFPLLKNSQTSKNS</sequence>